<proteinExistence type="evidence at protein level"/>
<comment type="function">
    <text>Part of the Ssh1 complex, which probably is the major component of a channel-forming translocon complex that may function exclusively in the cotranslational pathway of protein endoplasmic reticulum (ER) import.</text>
</comment>
<comment type="subunit">
    <text>Component of the heterotrimeric Ssh1 complex, which is composed of SSH1, SBH2 and SSS1.</text>
</comment>
<comment type="subcellular location">
    <subcellularLocation>
        <location>Endoplasmic reticulum membrane</location>
        <topology>Single-pass membrane protein</topology>
    </subcellularLocation>
</comment>
<comment type="miscellaneous">
    <text evidence="3">Present with 414 molecules/cell in log phase SD medium.</text>
</comment>
<comment type="similarity">
    <text evidence="4">Belongs to the SEC61-beta family.</text>
</comment>
<gene>
    <name type="primary">SBH2</name>
    <name type="synonym">SEB2</name>
    <name type="ordered locus">YER019C-A</name>
    <name type="ORF">YER019BC</name>
</gene>
<reference key="1">
    <citation type="journal article" date="1996" name="Yeast">
        <title>Yeast protein translocation complex: isolation of two genes SEB1 and SEB2 encoding proteins homologous to the Sec61 beta subunit.</title>
        <authorList>
            <person name="Toikkanen J."/>
            <person name="Gatti E."/>
            <person name="Takei K."/>
            <person name="Saloheimo M."/>
            <person name="Olkkonen V.M."/>
            <person name="Soederlund H."/>
            <person name="de Camilli P."/>
            <person name="Keraenen S."/>
        </authorList>
    </citation>
    <scope>NUCLEOTIDE SEQUENCE [MRNA]</scope>
</reference>
<reference key="2">
    <citation type="submission" date="2004-04" db="EMBL/GenBank/DDBJ databases">
        <title>Yeast Sec61 beta subunit.</title>
        <authorList>
            <person name="Finke K."/>
            <person name="Panzner S."/>
            <person name="Sommer T."/>
            <person name="Hartmann E."/>
            <person name="Rapoport T.A."/>
        </authorList>
    </citation>
    <scope>NUCLEOTIDE SEQUENCE [MRNA]</scope>
</reference>
<reference key="3">
    <citation type="journal article" date="1997" name="Nature">
        <title>The nucleotide sequence of Saccharomyces cerevisiae chromosome V.</title>
        <authorList>
            <person name="Dietrich F.S."/>
            <person name="Mulligan J.T."/>
            <person name="Hennessy K.M."/>
            <person name="Yelton M.A."/>
            <person name="Allen E."/>
            <person name="Araujo R."/>
            <person name="Aviles E."/>
            <person name="Berno A."/>
            <person name="Brennan T."/>
            <person name="Carpenter J."/>
            <person name="Chen E."/>
            <person name="Cherry J.M."/>
            <person name="Chung E."/>
            <person name="Duncan M."/>
            <person name="Guzman E."/>
            <person name="Hartzell G."/>
            <person name="Hunicke-Smith S."/>
            <person name="Hyman R.W."/>
            <person name="Kayser A."/>
            <person name="Komp C."/>
            <person name="Lashkari D."/>
            <person name="Lew H."/>
            <person name="Lin D."/>
            <person name="Mosedale D."/>
            <person name="Nakahara K."/>
            <person name="Namath A."/>
            <person name="Norgren R."/>
            <person name="Oefner P."/>
            <person name="Oh C."/>
            <person name="Petel F.X."/>
            <person name="Roberts D."/>
            <person name="Sehl P."/>
            <person name="Schramm S."/>
            <person name="Shogren T."/>
            <person name="Smith V."/>
            <person name="Taylor P."/>
            <person name="Wei Y."/>
            <person name="Botstein D."/>
            <person name="Davis R.W."/>
        </authorList>
    </citation>
    <scope>NUCLEOTIDE SEQUENCE [LARGE SCALE GENOMIC DNA]</scope>
    <source>
        <strain>ATCC 204508 / S288c</strain>
    </source>
</reference>
<reference key="4">
    <citation type="journal article" date="2014" name="G3 (Bethesda)">
        <title>The reference genome sequence of Saccharomyces cerevisiae: Then and now.</title>
        <authorList>
            <person name="Engel S.R."/>
            <person name="Dietrich F.S."/>
            <person name="Fisk D.G."/>
            <person name="Binkley G."/>
            <person name="Balakrishnan R."/>
            <person name="Costanzo M.C."/>
            <person name="Dwight S.S."/>
            <person name="Hitz B.C."/>
            <person name="Karra K."/>
            <person name="Nash R.S."/>
            <person name="Weng S."/>
            <person name="Wong E.D."/>
            <person name="Lloyd P."/>
            <person name="Skrzypek M.S."/>
            <person name="Miyasato S.R."/>
            <person name="Simison M."/>
            <person name="Cherry J.M."/>
        </authorList>
    </citation>
    <scope>GENOME REANNOTATION</scope>
    <source>
        <strain>ATCC 204508 / S288c</strain>
    </source>
</reference>
<reference key="5">
    <citation type="journal article" date="2007" name="Genome Res.">
        <title>Approaching a complete repository of sequence-verified protein-encoding clones for Saccharomyces cerevisiae.</title>
        <authorList>
            <person name="Hu Y."/>
            <person name="Rolfs A."/>
            <person name="Bhullar B."/>
            <person name="Murthy T.V.S."/>
            <person name="Zhu C."/>
            <person name="Berger M.F."/>
            <person name="Camargo A.A."/>
            <person name="Kelley F."/>
            <person name="McCarron S."/>
            <person name="Jepson D."/>
            <person name="Richardson A."/>
            <person name="Raphael J."/>
            <person name="Moreira D."/>
            <person name="Taycher E."/>
            <person name="Zuo D."/>
            <person name="Mohr S."/>
            <person name="Kane M.F."/>
            <person name="Williamson J."/>
            <person name="Simpson A.J.G."/>
            <person name="Bulyk M.L."/>
            <person name="Harlow E."/>
            <person name="Marsischky G."/>
            <person name="Kolodner R.D."/>
            <person name="LaBaer J."/>
        </authorList>
    </citation>
    <scope>NUCLEOTIDE SEQUENCE [GENOMIC DNA]</scope>
    <source>
        <strain>ATCC 204508 / S288c</strain>
    </source>
</reference>
<reference key="6">
    <citation type="journal article" date="1996" name="EMBO J.">
        <title>A second trimeric complex containing homologs of the Sec61p complex functions in protein transport across the ER membrane of S. cerevisiae.</title>
        <authorList>
            <person name="Finke K."/>
            <person name="Plath K."/>
            <person name="Panzner S."/>
            <person name="Prehn S."/>
            <person name="Rapoport T.A."/>
            <person name="Hartmann E."/>
            <person name="Sommer T."/>
        </authorList>
    </citation>
    <scope>PROTEIN SEQUENCE OF 16-32</scope>
</reference>
<reference key="7">
    <citation type="journal article" date="2003" name="Nature">
        <title>Global analysis of protein expression in yeast.</title>
        <authorList>
            <person name="Ghaemmaghami S."/>
            <person name="Huh W.-K."/>
            <person name="Bower K."/>
            <person name="Howson R.W."/>
            <person name="Belle A."/>
            <person name="Dephoure N."/>
            <person name="O'Shea E.K."/>
            <person name="Weissman J.S."/>
        </authorList>
    </citation>
    <scope>LEVEL OF PROTEIN EXPRESSION [LARGE SCALE ANALYSIS]</scope>
</reference>
<accession>P52871</accession>
<accession>D3DLR8</accession>
<accession>Q53X22</accession>
<evidence type="ECO:0000255" key="1"/>
<evidence type="ECO:0000256" key="2">
    <source>
        <dbReference type="SAM" id="MobiDB-lite"/>
    </source>
</evidence>
<evidence type="ECO:0000269" key="3">
    <source>
    </source>
</evidence>
<evidence type="ECO:0000305" key="4"/>
<dbReference type="EMBL" id="Z50012">
    <property type="protein sequence ID" value="CAA90305.1"/>
    <property type="molecule type" value="mRNA"/>
</dbReference>
<dbReference type="EMBL" id="L38891">
    <property type="protein sequence ID" value="AAT01101.1"/>
    <property type="molecule type" value="mRNA"/>
</dbReference>
<dbReference type="EMBL" id="U18778">
    <property type="protein sequence ID" value="AAB64567.1"/>
    <property type="molecule type" value="Genomic_DNA"/>
</dbReference>
<dbReference type="EMBL" id="AY693199">
    <property type="protein sequence ID" value="AAT93218.1"/>
    <property type="molecule type" value="Genomic_DNA"/>
</dbReference>
<dbReference type="EMBL" id="BK006939">
    <property type="protein sequence ID" value="DAA07672.1"/>
    <property type="molecule type" value="Genomic_DNA"/>
</dbReference>
<dbReference type="PIR" id="S68163">
    <property type="entry name" value="S68163"/>
</dbReference>
<dbReference type="RefSeq" id="NP_010936.1">
    <property type="nucleotide sequence ID" value="NM_001180031.1"/>
</dbReference>
<dbReference type="PDB" id="2WW9">
    <property type="method" value="EM"/>
    <property type="resolution" value="8.60 A"/>
    <property type="chains" value="C=1-87"/>
</dbReference>
<dbReference type="PDB" id="2WWA">
    <property type="method" value="EM"/>
    <property type="resolution" value="8.90 A"/>
    <property type="chains" value="C=1-87"/>
</dbReference>
<dbReference type="PDBsum" id="2WW9"/>
<dbReference type="PDBsum" id="2WWA"/>
<dbReference type="SMR" id="P52871"/>
<dbReference type="BioGRID" id="36753">
    <property type="interactions" value="78"/>
</dbReference>
<dbReference type="ComplexPortal" id="CPX-1834">
    <property type="entry name" value="SSH1 translocon complex"/>
</dbReference>
<dbReference type="DIP" id="DIP-1708N"/>
<dbReference type="FunCoup" id="P52871">
    <property type="interactions" value="191"/>
</dbReference>
<dbReference type="IntAct" id="P52871">
    <property type="interactions" value="6"/>
</dbReference>
<dbReference type="MINT" id="P52871"/>
<dbReference type="STRING" id="4932.YER019C-A"/>
<dbReference type="TCDB" id="3.A.5.8.1">
    <property type="family name" value="the general secretory pathway (sec) family"/>
</dbReference>
<dbReference type="iPTMnet" id="P52871"/>
<dbReference type="PaxDb" id="4932-YER019C-A"/>
<dbReference type="PeptideAtlas" id="P52871"/>
<dbReference type="TopDownProteomics" id="P52871"/>
<dbReference type="EnsemblFungi" id="YER019C-A_mRNA">
    <property type="protein sequence ID" value="YER019C-A"/>
    <property type="gene ID" value="YER019C-A"/>
</dbReference>
<dbReference type="GeneID" id="856740"/>
<dbReference type="KEGG" id="sce:YER019C-A"/>
<dbReference type="AGR" id="SGD:S000002127"/>
<dbReference type="SGD" id="S000002127">
    <property type="gene designation" value="SBH2"/>
</dbReference>
<dbReference type="VEuPathDB" id="FungiDB:YER019C-A"/>
<dbReference type="eggNOG" id="KOG3457">
    <property type="taxonomic scope" value="Eukaryota"/>
</dbReference>
<dbReference type="GeneTree" id="ENSGT00940000176828"/>
<dbReference type="HOGENOM" id="CLU_133423_1_1_1"/>
<dbReference type="InParanoid" id="P52871"/>
<dbReference type="OMA" id="FITCIMA"/>
<dbReference type="OrthoDB" id="5401193at2759"/>
<dbReference type="BioCyc" id="YEAST:G3O-30348-MONOMER"/>
<dbReference type="Reactome" id="R-SCE-9609523">
    <property type="pathway name" value="Insertion of tail-anchored proteins into the endoplasmic reticulum membrane"/>
</dbReference>
<dbReference type="BioGRID-ORCS" id="856740">
    <property type="hits" value="5 hits in 10 CRISPR screens"/>
</dbReference>
<dbReference type="EvolutionaryTrace" id="P52871"/>
<dbReference type="PRO" id="PR:P52871"/>
<dbReference type="Proteomes" id="UP000002311">
    <property type="component" value="Chromosome V"/>
</dbReference>
<dbReference type="RNAct" id="P52871">
    <property type="molecule type" value="protein"/>
</dbReference>
<dbReference type="GO" id="GO:0005789">
    <property type="term" value="C:endoplasmic reticulum membrane"/>
    <property type="evidence" value="ECO:0000303"/>
    <property type="project" value="ComplexPortal"/>
</dbReference>
<dbReference type="GO" id="GO:0016020">
    <property type="term" value="C:membrane"/>
    <property type="evidence" value="ECO:0000318"/>
    <property type="project" value="GO_Central"/>
</dbReference>
<dbReference type="GO" id="GO:0005637">
    <property type="term" value="C:nuclear inner membrane"/>
    <property type="evidence" value="ECO:0000314"/>
    <property type="project" value="SGD"/>
</dbReference>
<dbReference type="GO" id="GO:0005784">
    <property type="term" value="C:Sec61 translocon complex"/>
    <property type="evidence" value="ECO:0007669"/>
    <property type="project" value="InterPro"/>
</dbReference>
<dbReference type="GO" id="GO:0071261">
    <property type="term" value="C:Ssh1 translocon complex"/>
    <property type="evidence" value="ECO:0000314"/>
    <property type="project" value="SGD"/>
</dbReference>
<dbReference type="GO" id="GO:0005085">
    <property type="term" value="F:guanyl-nucleotide exchange factor activity"/>
    <property type="evidence" value="ECO:0000314"/>
    <property type="project" value="SGD"/>
</dbReference>
<dbReference type="GO" id="GO:0031204">
    <property type="term" value="P:post-translational protein targeting to membrane, translocation"/>
    <property type="evidence" value="ECO:0000318"/>
    <property type="project" value="GO_Central"/>
</dbReference>
<dbReference type="GO" id="GO:0006614">
    <property type="term" value="P:SRP-dependent cotranslational protein targeting to membrane"/>
    <property type="evidence" value="ECO:0000316"/>
    <property type="project" value="SGD"/>
</dbReference>
<dbReference type="GO" id="GO:0006616">
    <property type="term" value="P:SRP-dependent cotranslational protein targeting to membrane, translocation"/>
    <property type="evidence" value="ECO:0000318"/>
    <property type="project" value="GO_Central"/>
</dbReference>
<dbReference type="InterPro" id="IPR030671">
    <property type="entry name" value="Sec61-beta/Sbh"/>
</dbReference>
<dbReference type="InterPro" id="IPR016482">
    <property type="entry name" value="SecG/Sec61-beta/Sbh"/>
</dbReference>
<dbReference type="PANTHER" id="PTHR13509">
    <property type="entry name" value="SEC61 SUBUNIT BETA"/>
    <property type="match status" value="1"/>
</dbReference>
<dbReference type="Pfam" id="PF03911">
    <property type="entry name" value="Sec61_beta"/>
    <property type="match status" value="1"/>
</dbReference>
<dbReference type="PIRSF" id="PIRSF006398">
    <property type="entry name" value="Sec61_beta_euk"/>
    <property type="match status" value="1"/>
</dbReference>
<sequence>MAASVPPGGQRILQKRRQAQSIKEKQAKQTPTSTRQAGYGGSSSSILKLYTDEANGFRVDSLVVLFLSVGFIFSVIALHLLTKFTHII</sequence>
<keyword id="KW-0002">3D-structure</keyword>
<keyword id="KW-0903">Direct protein sequencing</keyword>
<keyword id="KW-0256">Endoplasmic reticulum</keyword>
<keyword id="KW-0472">Membrane</keyword>
<keyword id="KW-0653">Protein transport</keyword>
<keyword id="KW-1185">Reference proteome</keyword>
<keyword id="KW-0811">Translocation</keyword>
<keyword id="KW-0812">Transmembrane</keyword>
<keyword id="KW-1133">Transmembrane helix</keyword>
<keyword id="KW-0813">Transport</keyword>
<name>SC6B2_YEAST</name>
<organism>
    <name type="scientific">Saccharomyces cerevisiae (strain ATCC 204508 / S288c)</name>
    <name type="common">Baker's yeast</name>
    <dbReference type="NCBI Taxonomy" id="559292"/>
    <lineage>
        <taxon>Eukaryota</taxon>
        <taxon>Fungi</taxon>
        <taxon>Dikarya</taxon>
        <taxon>Ascomycota</taxon>
        <taxon>Saccharomycotina</taxon>
        <taxon>Saccharomycetes</taxon>
        <taxon>Saccharomycetales</taxon>
        <taxon>Saccharomycetaceae</taxon>
        <taxon>Saccharomyces</taxon>
    </lineage>
</organism>
<protein>
    <recommendedName>
        <fullName>Protein transport protein SBH2</fullName>
    </recommendedName>
    <alternativeName>
        <fullName>Ssh1 complex subunit SBH2</fullName>
    </alternativeName>
    <alternativeName>
        <fullName>Ssh1 complex subunit beta</fullName>
    </alternativeName>
</protein>
<feature type="chain" id="PRO_0000157262" description="Protein transport protein SBH2">
    <location>
        <begin position="1"/>
        <end position="88"/>
    </location>
</feature>
<feature type="topological domain" description="Cytoplasmic" evidence="1">
    <location>
        <begin position="1"/>
        <end position="61"/>
    </location>
</feature>
<feature type="transmembrane region" description="Helical" evidence="1">
    <location>
        <begin position="62"/>
        <end position="82"/>
    </location>
</feature>
<feature type="region of interest" description="Disordered" evidence="2">
    <location>
        <begin position="1"/>
        <end position="42"/>
    </location>
</feature>
<feature type="compositionally biased region" description="Polar residues" evidence="2">
    <location>
        <begin position="28"/>
        <end position="42"/>
    </location>
</feature>